<dbReference type="EMBL" id="DS496136">
    <property type="protein sequence ID" value="EDP01087.1"/>
    <property type="molecule type" value="Genomic_DNA"/>
</dbReference>
<dbReference type="EMBL" id="CM008969">
    <property type="protein sequence ID" value="PNW79806.1"/>
    <property type="molecule type" value="Genomic_DNA"/>
</dbReference>
<dbReference type="RefSeq" id="XP_001696064.1">
    <property type="nucleotide sequence ID" value="XM_001696012.1"/>
</dbReference>
<dbReference type="RefSeq" id="XP_001696138.1">
    <property type="nucleotide sequence ID" value="XM_001696086.1"/>
</dbReference>
<dbReference type="STRING" id="3055.P0DO18"/>
<dbReference type="ProMEX" id="P0DO18"/>
<dbReference type="EnsemblPlants" id="PNW79806">
    <property type="protein sequence ID" value="PNW79806"/>
    <property type="gene ID" value="CHLRE_08g367400v5"/>
</dbReference>
<dbReference type="EnsemblPlants" id="PNW79807">
    <property type="protein sequence ID" value="PNW79807"/>
    <property type="gene ID" value="CHLRE_08g367500v5"/>
</dbReference>
<dbReference type="Gramene" id="PNW79806">
    <property type="protein sequence ID" value="PNW79806"/>
    <property type="gene ID" value="CHLRE_08g367400v5"/>
</dbReference>
<dbReference type="Gramene" id="PNW79807">
    <property type="protein sequence ID" value="PNW79807"/>
    <property type="gene ID" value="CHLRE_08g367500v5"/>
</dbReference>
<dbReference type="KEGG" id="cre:CHLRE_08g367500v5"/>
<dbReference type="InParanoid" id="P0DO18"/>
<dbReference type="OMA" id="FTIRENY"/>
<dbReference type="OrthoDB" id="423598at2759"/>
<dbReference type="Proteomes" id="UP000006906">
    <property type="component" value="Chromosome 8"/>
</dbReference>
<dbReference type="GO" id="GO:0009535">
    <property type="term" value="C:chloroplast thylakoid membrane"/>
    <property type="evidence" value="ECO:0007669"/>
    <property type="project" value="UniProtKB-SubCell"/>
</dbReference>
<dbReference type="GO" id="GO:0009522">
    <property type="term" value="C:photosystem I"/>
    <property type="evidence" value="ECO:0007669"/>
    <property type="project" value="UniProtKB-KW"/>
</dbReference>
<dbReference type="GO" id="GO:0009523">
    <property type="term" value="C:photosystem II"/>
    <property type="evidence" value="ECO:0007669"/>
    <property type="project" value="UniProtKB-KW"/>
</dbReference>
<dbReference type="GO" id="GO:0016168">
    <property type="term" value="F:chlorophyll binding"/>
    <property type="evidence" value="ECO:0007669"/>
    <property type="project" value="UniProtKB-KW"/>
</dbReference>
<dbReference type="GO" id="GO:0046872">
    <property type="term" value="F:metal ion binding"/>
    <property type="evidence" value="ECO:0007669"/>
    <property type="project" value="UniProtKB-KW"/>
</dbReference>
<dbReference type="GO" id="GO:0010196">
    <property type="term" value="P:nonphotochemical quenching"/>
    <property type="evidence" value="ECO:0000315"/>
    <property type="project" value="UniProtKB"/>
</dbReference>
<dbReference type="GO" id="GO:0009768">
    <property type="term" value="P:photosynthesis, light harvesting in photosystem I"/>
    <property type="evidence" value="ECO:0000318"/>
    <property type="project" value="GO_Central"/>
</dbReference>
<dbReference type="GO" id="GO:0009644">
    <property type="term" value="P:response to high light intensity"/>
    <property type="evidence" value="ECO:0000315"/>
    <property type="project" value="UniProtKB"/>
</dbReference>
<dbReference type="GO" id="GO:0009416">
    <property type="term" value="P:response to light stimulus"/>
    <property type="evidence" value="ECO:0000318"/>
    <property type="project" value="GO_Central"/>
</dbReference>
<dbReference type="GO" id="GO:0080183">
    <property type="term" value="P:response to photooxidative stress"/>
    <property type="evidence" value="ECO:0000315"/>
    <property type="project" value="UniProtKB"/>
</dbReference>
<dbReference type="FunFam" id="1.10.3460.10:FF:000012">
    <property type="entry name" value="Fucoxanthin chlorophyll a/c protein, LI818 clade"/>
    <property type="match status" value="1"/>
</dbReference>
<dbReference type="Gene3D" id="1.10.3460.10">
    <property type="entry name" value="Chlorophyll a/b binding protein domain"/>
    <property type="match status" value="1"/>
</dbReference>
<dbReference type="InterPro" id="IPR001344">
    <property type="entry name" value="Chloro_AB-bd_pln"/>
</dbReference>
<dbReference type="InterPro" id="IPR022796">
    <property type="entry name" value="Chloroa_b-bind"/>
</dbReference>
<dbReference type="PANTHER" id="PTHR21649">
    <property type="entry name" value="CHLOROPHYLL A/B BINDING PROTEIN"/>
    <property type="match status" value="1"/>
</dbReference>
<dbReference type="Pfam" id="PF00504">
    <property type="entry name" value="Chloroa_b-bind"/>
    <property type="match status" value="1"/>
</dbReference>
<dbReference type="SUPFAM" id="SSF103511">
    <property type="entry name" value="Chlorophyll a-b binding protein"/>
    <property type="match status" value="1"/>
</dbReference>
<comment type="function">
    <text evidence="4 5 6 9 10 12 13 14 17 18">Required for non-photochemical quenching (NPQ), a mechanism that converts and dissipates the harmful excess absorbed light energy into heat and protect the photosynthetic apparatus from photo-oxidative damage (PubMed:19940928, PubMed:21267060, PubMed:23716695, PubMed:26817847, PubMed:27626383, PubMed:27693674, PubMed:28233792, PubMed:30782831, PubMed:31042040). NPQ includes dissipating excess light energy to heat (qE) and the reversible coupling of LHCII to photosystems (state transitions or qT), which are considered separate NPQ mechanisms (PubMed:28233792). Is responsible for most of the excess light energy to heat dissipation (qE), also known as energy-dependent chlorophyll fluorescence quenching activity of chlorophyll excited states (PubMed:21267060, PubMed:28233792). Involved in a de-coupling and re-coupling of energy transfer to photosystem II (PSII) during qT (PubMed:28233792). Binds chlorophyll a and b (PubMed:21267060, PubMed:27150505). Is able to sense luminal acidification of the thylakoid membranes, which occurs along with elevated electron flow caused by excess light (PubMed:21267060, PubMed:26817847, PubMed:31042040). Establishes interactions with photosystem II (PSII) antenna components upon lumen acidification, and protonation of lumen-exposed, negatively charged residues both in LHCSR3 and in PSII antenna components (PubMed:26817847). Mediates excitation energy transfer from light-harvesting complex II (LHCII) to photosystem I (PSI), rather than photosystem II (PSII), at low pH, which mimics the acidified lumen of the thylakoid membranes in high light-exposed chloroplasts (PubMed:30782831). Activates PSI-dependent fluorescence quenching in addition to dissipating excitation energy in LHCII to avoid photooxidative stress under excess light (PubMed:30782831). Contributes with PGRL1 to the regulation of electron flow upstream of photosystem I (PSI), and limits the accumulation of electrons on the PSI acceptor side, thus avoiding PSI photoinhibition (PubMed:27693674).</text>
</comment>
<comment type="subunit">
    <text evidence="8 15 16">Interacts with the photosystem II-light-harvesting complex II (PSII-LHCII) supercomplex to form PSII-LHCII-LHCSR3 supercomplex.</text>
</comment>
<comment type="subcellular location">
    <subcellularLocation>
        <location evidence="22">Plastid</location>
        <location evidence="22">Chloroplast thylakoid membrane</location>
        <topology evidence="2">Multi-pass membrane protein</topology>
    </subcellularLocation>
</comment>
<comment type="induction">
    <text evidence="3 4 5 7 11 13">Induced by sulfur deprivation (PubMed:15470261). Induced by high light stress (at protein level) (PubMed:19940928, PubMed:21267060, PubMed:24850838, PubMed:27358399, PubMed:27693674).</text>
</comment>
<comment type="disruption phenotype">
    <text evidence="4 12 13 14">Impaired in non-photochemical quenching (NPQ) under high light conditions.</text>
</comment>
<comment type="similarity">
    <text evidence="22">Belongs to the light-harvesting chlorophyll a/b-binding (LHC) protein family.</text>
</comment>
<evidence type="ECO:0000250" key="1">
    <source>
        <dbReference type="UniProtKB" id="P12333"/>
    </source>
</evidence>
<evidence type="ECO:0000255" key="2"/>
<evidence type="ECO:0000269" key="3">
    <source>
    </source>
</evidence>
<evidence type="ECO:0000269" key="4">
    <source>
    </source>
</evidence>
<evidence type="ECO:0000269" key="5">
    <source>
    </source>
</evidence>
<evidence type="ECO:0000269" key="6">
    <source>
    </source>
</evidence>
<evidence type="ECO:0000269" key="7">
    <source>
    </source>
</evidence>
<evidence type="ECO:0000269" key="8">
    <source>
    </source>
</evidence>
<evidence type="ECO:0000269" key="9">
    <source>
    </source>
</evidence>
<evidence type="ECO:0000269" key="10">
    <source>
    </source>
</evidence>
<evidence type="ECO:0000269" key="11">
    <source>
    </source>
</evidence>
<evidence type="ECO:0000269" key="12">
    <source>
    </source>
</evidence>
<evidence type="ECO:0000269" key="13">
    <source>
    </source>
</evidence>
<evidence type="ECO:0000269" key="14">
    <source>
    </source>
</evidence>
<evidence type="ECO:0000269" key="15">
    <source>
    </source>
</evidence>
<evidence type="ECO:0000269" key="16">
    <source>
    </source>
</evidence>
<evidence type="ECO:0000269" key="17">
    <source>
    </source>
</evidence>
<evidence type="ECO:0000269" key="18">
    <source>
    </source>
</evidence>
<evidence type="ECO:0000303" key="19">
    <source>
    </source>
</evidence>
<evidence type="ECO:0000303" key="20">
    <source>
    </source>
</evidence>
<evidence type="ECO:0000303" key="21">
    <source>
    </source>
</evidence>
<evidence type="ECO:0000305" key="22"/>
<evidence type="ECO:0000312" key="23">
    <source>
        <dbReference type="EMBL" id="EDP01087.1"/>
    </source>
</evidence>
<evidence type="ECO:0000312" key="24">
    <source>
        <dbReference type="EMBL" id="PNW79806.1"/>
    </source>
</evidence>
<reference key="1">
    <citation type="journal article" date="2007" name="Science">
        <title>The Chlamydomonas genome reveals the evolution of key animal and plant functions.</title>
        <authorList>
            <person name="Merchant S.S."/>
            <person name="Prochnik S.E."/>
            <person name="Vallon O."/>
            <person name="Harris E.H."/>
            <person name="Karpowicz S.J."/>
            <person name="Witman G.B."/>
            <person name="Terry A."/>
            <person name="Salamov A."/>
            <person name="Fritz-Laylin L.K."/>
            <person name="Marechal-Drouard L."/>
            <person name="Marshall W.F."/>
            <person name="Qu L.H."/>
            <person name="Nelson D.R."/>
            <person name="Sanderfoot A.A."/>
            <person name="Spalding M.H."/>
            <person name="Kapitonov V.V."/>
            <person name="Ren Q."/>
            <person name="Ferris P."/>
            <person name="Lindquist E."/>
            <person name="Shapiro H."/>
            <person name="Lucas S.M."/>
            <person name="Grimwood J."/>
            <person name="Schmutz J."/>
            <person name="Cardol P."/>
            <person name="Cerutti H."/>
            <person name="Chanfreau G."/>
            <person name="Chen C.L."/>
            <person name="Cognat V."/>
            <person name="Croft M.T."/>
            <person name="Dent R."/>
            <person name="Dutcher S."/>
            <person name="Fernandez E."/>
            <person name="Fukuzawa H."/>
            <person name="Gonzalez-Ballester D."/>
            <person name="Gonzalez-Halphen D."/>
            <person name="Hallmann A."/>
            <person name="Hanikenne M."/>
            <person name="Hippler M."/>
            <person name="Inwood W."/>
            <person name="Jabbari K."/>
            <person name="Kalanon M."/>
            <person name="Kuras R."/>
            <person name="Lefebvre P.A."/>
            <person name="Lemaire S.D."/>
            <person name="Lobanov A.V."/>
            <person name="Lohr M."/>
            <person name="Manuell A."/>
            <person name="Meier I."/>
            <person name="Mets L."/>
            <person name="Mittag M."/>
            <person name="Mittelmeier T."/>
            <person name="Moroney J.V."/>
            <person name="Moseley J."/>
            <person name="Napoli C."/>
            <person name="Nedelcu A.M."/>
            <person name="Niyogi K."/>
            <person name="Novoselov S.V."/>
            <person name="Paulsen I.T."/>
            <person name="Pazour G.J."/>
            <person name="Purton S."/>
            <person name="Ral J.P."/>
            <person name="Riano-Pachon D.M."/>
            <person name="Riekhof W."/>
            <person name="Rymarquis L."/>
            <person name="Schroda M."/>
            <person name="Stern D."/>
            <person name="Umen J."/>
            <person name="Willows R."/>
            <person name="Wilson N."/>
            <person name="Zimmer S.L."/>
            <person name="Allmer J."/>
            <person name="Balk J."/>
            <person name="Bisova K."/>
            <person name="Chen C.J."/>
            <person name="Elias M."/>
            <person name="Gendler K."/>
            <person name="Hauser C."/>
            <person name="Lamb M.R."/>
            <person name="Ledford H."/>
            <person name="Long J.C."/>
            <person name="Minagawa J."/>
            <person name="Page M.D."/>
            <person name="Pan J."/>
            <person name="Pootakham W."/>
            <person name="Roje S."/>
            <person name="Rose A."/>
            <person name="Stahlberg E."/>
            <person name="Terauchi A.M."/>
            <person name="Yang P."/>
            <person name="Ball S."/>
            <person name="Bowler C."/>
            <person name="Dieckmann C.L."/>
            <person name="Gladyshev V.N."/>
            <person name="Green P."/>
            <person name="Jorgensen R."/>
            <person name="Mayfield S."/>
            <person name="Mueller-Roeber B."/>
            <person name="Rajamani S."/>
            <person name="Sayre R.T."/>
            <person name="Brokstein P."/>
            <person name="Dubchak I."/>
            <person name="Goodstein D."/>
            <person name="Hornick L."/>
            <person name="Huang Y.W."/>
            <person name="Jhaveri J."/>
            <person name="Luo Y."/>
            <person name="Martinez D."/>
            <person name="Ngau W.C."/>
            <person name="Otillar B."/>
            <person name="Poliakov A."/>
            <person name="Porter A."/>
            <person name="Szajkowski L."/>
            <person name="Werner G."/>
            <person name="Zhou K."/>
            <person name="Grigoriev I.V."/>
            <person name="Rokhsar D.S."/>
            <person name="Grossman A.R."/>
        </authorList>
    </citation>
    <scope>NUCLEOTIDE SEQUENCE [LARGE SCALE GENOMIC DNA]</scope>
    <source>
        <strain>CC-503</strain>
    </source>
</reference>
<reference key="2">
    <citation type="submission" date="2017-07" db="EMBL/GenBank/DDBJ databases">
        <title>WGS assembly of Chlamydomonas reinhardtii.</title>
        <authorList>
            <consortium name="Chlamydomonas Annotation Team"/>
            <consortium name="JGI Annotation Team"/>
            <person name="Merchant S.S."/>
            <person name="Prochnik S.E."/>
            <person name="Vallon O."/>
            <person name="Harris E.H."/>
            <person name="Karpowicz S.J."/>
            <person name="Witman G.B."/>
            <person name="Terry A."/>
            <person name="Salamov A."/>
            <person name="Fritz-Laylin L.K."/>
            <person name="Marechal-Drouard L."/>
            <person name="Marshall W.F."/>
            <person name="Qu L.H."/>
            <person name="Nelson D.R."/>
            <person name="Sanderfoot A.A."/>
            <person name="Spalding M.H."/>
            <person name="Kapitonov V.V."/>
            <person name="Ren Q."/>
            <person name="Ferris P."/>
            <person name="Lindquist E."/>
            <person name="Shapiro H."/>
            <person name="Lucas S.M."/>
            <person name="Grimwood J."/>
            <person name="Schmutz J."/>
            <person name="Grigoriev I.V."/>
            <person name="Rokhsar D.S."/>
        </authorList>
    </citation>
    <scope>GENOME REANNOTATION</scope>
    <source>
        <strain>CC-503</strain>
    </source>
</reference>
<reference key="3">
    <citation type="journal article" date="2004" name="Eukaryot. Cell">
        <title>Insights into the survival of Chlamydomonas reinhardtii during sulfur starvation based on microarray analysis of gene expression.</title>
        <authorList>
            <person name="Zhang Z."/>
            <person name="Shrager J."/>
            <person name="Jain M."/>
            <person name="Chang C.W."/>
            <person name="Vallon O."/>
            <person name="Grossman A.R."/>
        </authorList>
    </citation>
    <scope>INDUCTION BY SULFUR DEPRIVATION</scope>
</reference>
<reference key="4">
    <citation type="journal article" date="2009" name="Nature">
        <title>An ancient light-harvesting protein is critical for the regulation of algal photosynthesis.</title>
        <authorList>
            <person name="Peers G."/>
            <person name="Truong T.B."/>
            <person name="Ostendorf E."/>
            <person name="Busch A."/>
            <person name="Elrad D."/>
            <person name="Grossman A.R."/>
            <person name="Hippler M."/>
            <person name="Niyogi K.K."/>
        </authorList>
    </citation>
    <scope>FUNCTION</scope>
    <scope>INDUCTION BY HIGH LIGHT</scope>
    <scope>DISRUPTION PHENOTYPE</scope>
</reference>
<reference key="5">
    <citation type="journal article" date="2011" name="PLoS Biol.">
        <title>Analysis of LhcSR3, a protein essential for feedback de-excitation in the green alga Chlamydomonas reinhardtii.</title>
        <authorList>
            <person name="Bonente G."/>
            <person name="Ballottari M."/>
            <person name="Truong T.B."/>
            <person name="Morosinotto T."/>
            <person name="Ahn T.K."/>
            <person name="Fleming G.R."/>
            <person name="Niyogi K.K."/>
            <person name="Bassi R."/>
        </authorList>
    </citation>
    <scope>FUNCTION</scope>
    <scope>INDUCTION BY HIGH LIGHT</scope>
</reference>
<reference key="6">
    <citation type="journal article" date="2013" name="Proc. Natl. Acad. Sci. U.S.A.">
        <title>Energy-dissipative supercomplex of photosystem II associated with LHCSR3 in Chlamydomonas reinhardtii.</title>
        <authorList>
            <person name="Tokutsu R."/>
            <person name="Minagawa J."/>
        </authorList>
    </citation>
    <scope>FUNCTION</scope>
</reference>
<reference key="7">
    <citation type="journal article" date="2014" name="Plant Cell Physiol.">
        <title>Transcriptional regulation of the stress-responsive light harvesting complex genes in Chlamydomonas reinhardtii.</title>
        <authorList>
            <person name="Maruyama S."/>
            <person name="Tokutsu R."/>
            <person name="Minagawa J."/>
        </authorList>
    </citation>
    <scope>INDUCTION BY HIGH LIGHT</scope>
</reference>
<reference key="8">
    <citation type="journal article" date="2015" name="Plant Physiol.">
        <title>PHOTOSYSTEM II SUBUNIT R is required for efficient binding of LIGHT-HARVESTING COMPLEX STRESS-RELATED PROTEIN3 to photosystem II-light-harvesting supercomplexes in Chlamydomonas reinhardtii.</title>
        <authorList>
            <person name="Xue H."/>
            <person name="Tokutsu R."/>
            <person name="Bergner S.V."/>
            <person name="Scholz M."/>
            <person name="Minagawa J."/>
            <person name="Hippler M."/>
        </authorList>
    </citation>
    <scope>INTERACTION WITH PSII-LHCII SUPERCOMPLEX</scope>
</reference>
<reference key="9">
    <citation type="journal article" date="2016" name="Biochim. Biophys. Acta">
        <title>Excitation dynamics and structural implication of the stress-related complex LHCSR3 from the green alga Chlamydomonas reinhardtii.</title>
        <authorList>
            <person name="Liguori N."/>
            <person name="Novoderezhkin V."/>
            <person name="Roy L.M."/>
            <person name="van Grondelle R."/>
            <person name="Croce R."/>
        </authorList>
    </citation>
    <scope>FUNCTION</scope>
</reference>
<reference key="10">
    <citation type="journal article" date="2016" name="J. Biol. Chem.">
        <title>Identification of pH-sensing sites in the light harvesting complex stress-related 3 protein essential for triggering non-photochemical quenching in Chlamydomonas reinhardtii.</title>
        <authorList>
            <person name="Ballottari M."/>
            <person name="Truong T.B."/>
            <person name="De Re E."/>
            <person name="Erickson E."/>
            <person name="Stella G.R."/>
            <person name="Fleming G.R."/>
            <person name="Bassi R."/>
            <person name="Niyogi K.K."/>
        </authorList>
    </citation>
    <scope>FUNCTION</scope>
    <scope>MUTAGENESIS OF ASP-117; GLU-221 AND GLU-224</scope>
</reference>
<reference key="11">
    <citation type="journal article" date="2016" name="J. Biol. Chem.">
        <title>Photosystem II subunit PsbS is involved in the induction of LHCSR protein-dependent energy dissipation in Chlamydomonas reinhardtii.</title>
        <authorList>
            <person name="Correa-Galvis V."/>
            <person name="Redekop P."/>
            <person name="Guan K."/>
            <person name="Griess A."/>
            <person name="Truong T.B."/>
            <person name="Wakao S."/>
            <person name="Niyogi K.K."/>
            <person name="Jahns P."/>
        </authorList>
    </citation>
    <scope>INDUCTION BY HIGH LIGHT</scope>
</reference>
<reference key="12">
    <citation type="journal article" date="2016" name="Nature">
        <title>A blue-light photoreceptor mediates the feedback regulation of photosynthesis.</title>
        <authorList>
            <person name="Petroutsos D."/>
            <person name="Tokutsu R."/>
            <person name="Maruyama S."/>
            <person name="Flori S."/>
            <person name="Greiner A."/>
            <person name="Magneschi L."/>
            <person name="Cusant L."/>
            <person name="Kottke T."/>
            <person name="Mittag M."/>
            <person name="Hegemann P."/>
            <person name="Finazzi G."/>
            <person name="Minagawa J."/>
        </authorList>
    </citation>
    <scope>FUNCTION</scope>
    <scope>DISRUPTION PHENOTYPE</scope>
</reference>
<reference key="13">
    <citation type="journal article" date="2017" name="Biochim. Biophys. Acta">
        <title>Interaction between the photoprotective protein LHCSR3 and C2S2 photosystem II supercomplex in Chlamydomonas reinhardtii.</title>
        <authorList>
            <person name="Semchonok D.A."/>
            <person name="Sathish Yadav K.N."/>
            <person name="Xu P."/>
            <person name="Drop B."/>
            <person name="Croce R."/>
            <person name="Boekema E.J."/>
        </authorList>
    </citation>
    <scope>INTERACTION WITH PSII-LHCII SUPERCOMPLEX</scope>
</reference>
<reference key="14">
    <citation type="journal article" date="2017" name="J. Biol. Chem.">
        <title>Fluorescence lifetime analyses reveal how the high light-responsive protein LHCSR3 transforms PSII light-harvesting complexes into an energy-dissipative state.</title>
        <authorList>
            <person name="Kim E."/>
            <person name="Akimoto S."/>
            <person name="Tokutsu R."/>
            <person name="Yokono M."/>
            <person name="Minagawa J."/>
        </authorList>
    </citation>
    <scope>INTERACTION WITH PSII-LHCII SUPERCOMPLEX</scope>
</reference>
<reference key="15">
    <citation type="journal article" date="2017" name="Mol. Plant">
        <title>PGRL1 and LHCSR3 compensate for each other in controlling photosynthesis and avoiding photosystem I photoinhibition during high light acclimation of Chlamydomonas cells.</title>
        <authorList>
            <person name="Chaux F."/>
            <person name="Johnson X."/>
            <person name="Auroy P."/>
            <person name="Beyly-Adriano A."/>
            <person name="Te I."/>
            <person name="Cuine S."/>
            <person name="Peltier G."/>
        </authorList>
    </citation>
    <scope>FUNCTION</scope>
    <scope>INDUCTION BY HIGH LIGHT</scope>
    <scope>DISRUPTION PHENOTYPE</scope>
</reference>
<reference key="16">
    <citation type="journal article" date="2017" name="Sci. Rep.">
        <title>LHCSR3 affects de-coupling and re-coupling of LHCII to PSII during state transitions in Chlamydomonas reinhardtii.</title>
        <authorList>
            <person name="Roach T."/>
            <person name="Na C.S."/>
        </authorList>
    </citation>
    <scope>FUNCTION</scope>
    <scope>DISRUPTION PHENOTYPE</scope>
</reference>
<reference key="17">
    <citation type="journal article" date="2019" name="J. Phys. Chem. Lett.">
        <title>Molecular mechanisms of nonphotochemical quenching in the LHCSR3 protein of Chlamydomonas reinhardtii.</title>
        <authorList>
            <person name="de la Cruz Valbuena G."/>
            <person name="Camargo F.V."/>
            <person name="Borrego-Varillas R."/>
            <person name="Perozeni F."/>
            <person name="D'Andrea C."/>
            <person name="Ballottari M."/>
            <person name="Cerullo G."/>
        </authorList>
    </citation>
    <scope>FUNCTION</scope>
</reference>
<reference key="18">
    <citation type="journal article" date="2019" name="Proc. Natl. Acad. Sci. U.S.A.">
        <title>LHCSR3 is a nonphotochemical quencher of both photosystems in Chlamydomonas reinhardtii.</title>
        <authorList>
            <person name="Girolomoni L."/>
            <person name="Cazzaniga S."/>
            <person name="Pinnola A."/>
            <person name="Perozeni F."/>
            <person name="Ballottari M."/>
            <person name="Bassi R."/>
        </authorList>
    </citation>
    <scope>FUNCTION</scope>
</reference>
<organism>
    <name type="scientific">Chlamydomonas reinhardtii</name>
    <name type="common">Chlamydomonas smithii</name>
    <dbReference type="NCBI Taxonomy" id="3055"/>
    <lineage>
        <taxon>Eukaryota</taxon>
        <taxon>Viridiplantae</taxon>
        <taxon>Chlorophyta</taxon>
        <taxon>core chlorophytes</taxon>
        <taxon>Chlorophyceae</taxon>
        <taxon>CS clade</taxon>
        <taxon>Chlamydomonadales</taxon>
        <taxon>Chlamydomonadaceae</taxon>
        <taxon>Chlamydomonas</taxon>
    </lineage>
</organism>
<feature type="transit peptide" description="Chloroplast" evidence="2">
    <location>
        <begin position="1"/>
        <end position="45"/>
    </location>
</feature>
<feature type="chain" id="PRO_0000447655" description="Light-harvesting complex stress-related protein 3.2, chloroplastic">
    <location>
        <begin position="46"/>
        <end position="259"/>
    </location>
</feature>
<feature type="transmembrane region" description="Helical" evidence="2">
    <location>
        <begin position="93"/>
        <end position="113"/>
    </location>
</feature>
<feature type="transmembrane region" description="Helical" evidence="2">
    <location>
        <begin position="137"/>
        <end position="157"/>
    </location>
</feature>
<feature type="transmembrane region" description="Helical" evidence="2">
    <location>
        <begin position="203"/>
        <end position="223"/>
    </location>
</feature>
<feature type="binding site" description="axial binding residue" evidence="1">
    <location>
        <position position="51"/>
    </location>
    <ligand>
        <name>chlorophyll b</name>
        <dbReference type="ChEBI" id="CHEBI:61721"/>
        <label>1</label>
    </ligand>
    <ligandPart>
        <name>Mg</name>
        <dbReference type="ChEBI" id="CHEBI:25107"/>
    </ligandPart>
</feature>
<feature type="binding site" evidence="1">
    <location>
        <position position="66"/>
    </location>
    <ligand>
        <name>chlorophyll a</name>
        <dbReference type="ChEBI" id="CHEBI:58416"/>
        <label>1</label>
    </ligand>
</feature>
<feature type="binding site" description="axial binding residue" evidence="1">
    <location>
        <position position="87"/>
    </location>
    <ligand>
        <name>chlorophyll a</name>
        <dbReference type="ChEBI" id="CHEBI:58416"/>
        <label>1</label>
    </ligand>
    <ligandPart>
        <name>Mg</name>
        <dbReference type="ChEBI" id="CHEBI:25107"/>
    </ligandPart>
</feature>
<feature type="binding site" description="axial binding residue" evidence="1">
    <location>
        <position position="90"/>
    </location>
    <ligand>
        <name>chlorophyll a</name>
        <dbReference type="ChEBI" id="CHEBI:58416"/>
        <label>2</label>
    </ligand>
    <ligandPart>
        <name>Mg</name>
        <dbReference type="ChEBI" id="CHEBI:25107"/>
    </ligandPart>
</feature>
<feature type="binding site" evidence="1">
    <location>
        <position position="92"/>
    </location>
    <ligand>
        <name>chlorophyll b</name>
        <dbReference type="ChEBI" id="CHEBI:61721"/>
        <label>2</label>
    </ligand>
</feature>
<feature type="binding site" evidence="1">
    <location>
        <position position="130"/>
    </location>
    <ligand>
        <name>chlorophyll a</name>
        <dbReference type="ChEBI" id="CHEBI:58416"/>
        <label>3</label>
    </ligand>
</feature>
<feature type="binding site" description="axial binding residue" evidence="1">
    <location>
        <position position="147"/>
    </location>
    <ligand>
        <name>chlorophyll b</name>
        <dbReference type="ChEBI" id="CHEBI:61721"/>
        <label>3</label>
    </ligand>
    <ligandPart>
        <name>Mg</name>
        <dbReference type="ChEBI" id="CHEBI:25107"/>
    </ligandPart>
</feature>
<feature type="binding site" evidence="1">
    <location>
        <position position="150"/>
    </location>
    <ligand>
        <name>chlorophyll b</name>
        <dbReference type="ChEBI" id="CHEBI:61721"/>
        <label>4</label>
    </ligand>
</feature>
<feature type="binding site" evidence="1">
    <location>
        <position position="196"/>
    </location>
    <ligand>
        <name>chlorophyll a</name>
        <dbReference type="ChEBI" id="CHEBI:58416"/>
        <label>5</label>
    </ligand>
</feature>
<feature type="binding site" description="axial binding residue" evidence="1">
    <location>
        <position position="197"/>
    </location>
    <ligand>
        <name>chlorophyll a</name>
        <dbReference type="ChEBI" id="CHEBI:58416"/>
        <label>3</label>
    </ligand>
    <ligandPart>
        <name>Mg</name>
        <dbReference type="ChEBI" id="CHEBI:25107"/>
    </ligandPart>
</feature>
<feature type="binding site" description="axial binding residue" evidence="1">
    <location>
        <position position="200"/>
    </location>
    <ligand>
        <name>chlorophyll a</name>
        <dbReference type="ChEBI" id="CHEBI:58416"/>
        <label>4</label>
    </ligand>
    <ligandPart>
        <name>Mg</name>
        <dbReference type="ChEBI" id="CHEBI:25107"/>
    </ligandPart>
</feature>
<feature type="binding site" evidence="1">
    <location>
        <position position="202"/>
    </location>
    <ligand>
        <name>chlorophyll a</name>
        <dbReference type="ChEBI" id="CHEBI:58416"/>
        <label>1</label>
    </ligand>
</feature>
<feature type="binding site" description="axial binding residue" evidence="1">
    <location>
        <position position="214"/>
    </location>
    <ligand>
        <name>chlorophyll a</name>
        <dbReference type="ChEBI" id="CHEBI:58416"/>
        <label>5</label>
    </ligand>
    <ligandPart>
        <name>Mg</name>
        <dbReference type="ChEBI" id="CHEBI:25107"/>
    </ligandPart>
</feature>
<feature type="mutagenesis site" description="Impaired in non-photochemical quenching (NPQ) under high light conditions; when associated with Q-221 and Q-224." evidence="9">
    <original>D</original>
    <variation>N</variation>
    <location>
        <position position="117"/>
    </location>
</feature>
<feature type="mutagenesis site" description="Impaired in non-photochemical quenching (NPQ) under high light conditions; when associated with N-117 and Q-224." evidence="9">
    <original>E</original>
    <variation>Q</variation>
    <location>
        <position position="221"/>
    </location>
</feature>
<feature type="mutagenesis site" description="Impaired in non-photochemical quenching (NPQ) under high light conditions; when associated with N-117 and Q-221." evidence="9">
    <original>E</original>
    <variation>Q</variation>
    <location>
        <position position="224"/>
    </location>
</feature>
<keyword id="KW-0148">Chlorophyll</keyword>
<keyword id="KW-0150">Chloroplast</keyword>
<keyword id="KW-0157">Chromophore</keyword>
<keyword id="KW-0460">Magnesium</keyword>
<keyword id="KW-0472">Membrane</keyword>
<keyword id="KW-0479">Metal-binding</keyword>
<keyword id="KW-0602">Photosynthesis</keyword>
<keyword id="KW-0603">Photosystem I</keyword>
<keyword id="KW-0604">Photosystem II</keyword>
<keyword id="KW-0934">Plastid</keyword>
<keyword id="KW-1185">Reference proteome</keyword>
<keyword id="KW-0346">Stress response</keyword>
<keyword id="KW-0793">Thylakoid</keyword>
<keyword id="KW-0809">Transit peptide</keyword>
<keyword id="KW-0812">Transmembrane</keyword>
<keyword id="KW-1133">Transmembrane helix</keyword>
<gene>
    <name evidence="20" type="primary">LHCSR3.2</name>
    <name evidence="19" type="synonym">LHCSR2</name>
    <name evidence="21" type="synonym">LHCSR3</name>
    <name evidence="24" type="ORF">CHLRE_08g367400v5</name>
    <name evidence="23" type="ORF">CHLREDRAFT_184730</name>
</gene>
<name>LHR32_CHLRE</name>
<proteinExistence type="evidence at protein level"/>
<accession>P0DO18</accession>
<accession>A8J431</accession>
<sequence length="259" mass="28224">MLANVVSRKASGLRQTPARATVAVKSVSGRRTTAAEPQTAAPVAAEDVFAYTKNLPGVTAPFEGVFDPAGFLATASIKDVRRWRESEITHGRVAMLAALGFVVGEQLQDFPLFFNWDGRVSGPAIYHFQQIGQGFWEPLLIAIGVAESYRVAVGWATPTGTGFNSLKDDYEPGDLGFDPLGLKPTDPEELKVMQTKELNNGRLAMIAIAAFVAQELVEQTEIFEHLALRFEKEAILELDDIERDLGLPVTPLPDNLKSL</sequence>
<protein>
    <recommendedName>
        <fullName evidence="20">Light-harvesting complex stress-related protein 3.2, chloroplastic</fullName>
    </recommendedName>
    <alternativeName>
        <fullName evidence="22">Chlorophyll a-b binding protein LHCSR3.2</fullName>
    </alternativeName>
</protein>